<proteinExistence type="inferred from homology"/>
<protein>
    <recommendedName>
        <fullName>ATP-dependent RNA helicase DBP10</fullName>
        <ecNumber>3.6.4.13</ecNumber>
    </recommendedName>
</protein>
<evidence type="ECO:0000250" key="1"/>
<evidence type="ECO:0000255" key="2">
    <source>
        <dbReference type="PROSITE-ProRule" id="PRU00541"/>
    </source>
</evidence>
<evidence type="ECO:0000255" key="3">
    <source>
        <dbReference type="PROSITE-ProRule" id="PRU00542"/>
    </source>
</evidence>
<evidence type="ECO:0000256" key="4">
    <source>
        <dbReference type="SAM" id="MobiDB-lite"/>
    </source>
</evidence>
<evidence type="ECO:0000305" key="5"/>
<comment type="function">
    <text evidence="1">ATP-binding RNA helicase involved in the biogenesis of 60S ribosomal subunits and is required for the normal formation of 25S and 5.8S rRNAs.</text>
</comment>
<comment type="catalytic activity">
    <reaction>
        <text>ATP + H2O = ADP + phosphate + H(+)</text>
        <dbReference type="Rhea" id="RHEA:13065"/>
        <dbReference type="ChEBI" id="CHEBI:15377"/>
        <dbReference type="ChEBI" id="CHEBI:15378"/>
        <dbReference type="ChEBI" id="CHEBI:30616"/>
        <dbReference type="ChEBI" id="CHEBI:43474"/>
        <dbReference type="ChEBI" id="CHEBI:456216"/>
        <dbReference type="EC" id="3.6.4.13"/>
    </reaction>
</comment>
<comment type="subcellular location">
    <subcellularLocation>
        <location evidence="1">Nucleus</location>
        <location evidence="1">Nucleolus</location>
    </subcellularLocation>
</comment>
<comment type="domain">
    <text>The Q motif is unique to and characteristic of the DEAD box family of RNA helicases and controls ATP binding and hydrolysis.</text>
</comment>
<comment type="similarity">
    <text evidence="5">Belongs to the DEAD box helicase family. DDX54/DBP10 subfamily.</text>
</comment>
<dbReference type="EC" id="3.6.4.13"/>
<dbReference type="EMBL" id="CR382130">
    <property type="protein sequence ID" value="CAG81435.1"/>
    <property type="molecule type" value="Genomic_DNA"/>
</dbReference>
<dbReference type="RefSeq" id="XP_503234.1">
    <property type="nucleotide sequence ID" value="XM_503234.1"/>
</dbReference>
<dbReference type="SMR" id="Q6C7X8"/>
<dbReference type="FunCoup" id="Q6C7X8">
    <property type="interactions" value="1104"/>
</dbReference>
<dbReference type="STRING" id="284591.Q6C7X8"/>
<dbReference type="EnsemblFungi" id="CAG81435">
    <property type="protein sequence ID" value="CAG81435"/>
    <property type="gene ID" value="YALI0_D24497g"/>
</dbReference>
<dbReference type="KEGG" id="yli:2910446"/>
<dbReference type="VEuPathDB" id="FungiDB:YALI0_D24497g"/>
<dbReference type="HOGENOM" id="CLU_003041_5_0_1"/>
<dbReference type="InParanoid" id="Q6C7X8"/>
<dbReference type="OMA" id="EDQFGMM"/>
<dbReference type="OrthoDB" id="120284at4891"/>
<dbReference type="Proteomes" id="UP000001300">
    <property type="component" value="Chromosome D"/>
</dbReference>
<dbReference type="GO" id="GO:0005730">
    <property type="term" value="C:nucleolus"/>
    <property type="evidence" value="ECO:0000318"/>
    <property type="project" value="GO_Central"/>
</dbReference>
<dbReference type="GO" id="GO:0030687">
    <property type="term" value="C:preribosome, large subunit precursor"/>
    <property type="evidence" value="ECO:0007669"/>
    <property type="project" value="EnsemblFungi"/>
</dbReference>
<dbReference type="GO" id="GO:0005524">
    <property type="term" value="F:ATP binding"/>
    <property type="evidence" value="ECO:0007669"/>
    <property type="project" value="UniProtKB-KW"/>
</dbReference>
<dbReference type="GO" id="GO:0016887">
    <property type="term" value="F:ATP hydrolysis activity"/>
    <property type="evidence" value="ECO:0007669"/>
    <property type="project" value="RHEA"/>
</dbReference>
<dbReference type="GO" id="GO:0042802">
    <property type="term" value="F:identical protein binding"/>
    <property type="evidence" value="ECO:0007669"/>
    <property type="project" value="EnsemblFungi"/>
</dbReference>
<dbReference type="GO" id="GO:0003723">
    <property type="term" value="F:RNA binding"/>
    <property type="evidence" value="ECO:0007669"/>
    <property type="project" value="UniProtKB-KW"/>
</dbReference>
<dbReference type="GO" id="GO:0003724">
    <property type="term" value="F:RNA helicase activity"/>
    <property type="evidence" value="ECO:0007669"/>
    <property type="project" value="UniProtKB-EC"/>
</dbReference>
<dbReference type="GO" id="GO:1902626">
    <property type="term" value="P:assembly of large subunit precursor of preribosome"/>
    <property type="evidence" value="ECO:0007669"/>
    <property type="project" value="EnsemblFungi"/>
</dbReference>
<dbReference type="GO" id="GO:0000466">
    <property type="term" value="P:maturation of 5.8S rRNA from tricistronic rRNA transcript (SSU-rRNA, 5.8S rRNA, LSU-rRNA)"/>
    <property type="evidence" value="ECO:0007669"/>
    <property type="project" value="EnsemblFungi"/>
</dbReference>
<dbReference type="GO" id="GO:0000463">
    <property type="term" value="P:maturation of LSU-rRNA from tricistronic rRNA transcript (SSU-rRNA, 5.8S rRNA, LSU-rRNA)"/>
    <property type="evidence" value="ECO:0007669"/>
    <property type="project" value="EnsemblFungi"/>
</dbReference>
<dbReference type="GO" id="GO:0006364">
    <property type="term" value="P:rRNA processing"/>
    <property type="evidence" value="ECO:0000318"/>
    <property type="project" value="GO_Central"/>
</dbReference>
<dbReference type="CDD" id="cd17959">
    <property type="entry name" value="DEADc_DDX54"/>
    <property type="match status" value="1"/>
</dbReference>
<dbReference type="CDD" id="cd18787">
    <property type="entry name" value="SF2_C_DEAD"/>
    <property type="match status" value="1"/>
</dbReference>
<dbReference type="FunFam" id="3.40.50.300:FF:000865">
    <property type="entry name" value="ATP-dependent RNA helicase DDX54"/>
    <property type="match status" value="1"/>
</dbReference>
<dbReference type="Gene3D" id="3.40.50.300">
    <property type="entry name" value="P-loop containing nucleotide triphosphate hydrolases"/>
    <property type="match status" value="2"/>
</dbReference>
<dbReference type="InterPro" id="IPR012541">
    <property type="entry name" value="DBP10_C"/>
</dbReference>
<dbReference type="InterPro" id="IPR033517">
    <property type="entry name" value="DDX54/DBP10_DEAD-box_helicase"/>
</dbReference>
<dbReference type="InterPro" id="IPR011545">
    <property type="entry name" value="DEAD/DEAH_box_helicase_dom"/>
</dbReference>
<dbReference type="InterPro" id="IPR050079">
    <property type="entry name" value="DEAD_box_RNA_helicase"/>
</dbReference>
<dbReference type="InterPro" id="IPR014001">
    <property type="entry name" value="Helicase_ATP-bd"/>
</dbReference>
<dbReference type="InterPro" id="IPR001650">
    <property type="entry name" value="Helicase_C-like"/>
</dbReference>
<dbReference type="InterPro" id="IPR027417">
    <property type="entry name" value="P-loop_NTPase"/>
</dbReference>
<dbReference type="InterPro" id="IPR014014">
    <property type="entry name" value="RNA_helicase_DEAD_Q_motif"/>
</dbReference>
<dbReference type="PANTHER" id="PTHR47959">
    <property type="entry name" value="ATP-DEPENDENT RNA HELICASE RHLE-RELATED"/>
    <property type="match status" value="1"/>
</dbReference>
<dbReference type="PANTHER" id="PTHR47959:SF8">
    <property type="entry name" value="RNA HELICASE"/>
    <property type="match status" value="1"/>
</dbReference>
<dbReference type="Pfam" id="PF08147">
    <property type="entry name" value="DBP10CT"/>
    <property type="match status" value="1"/>
</dbReference>
<dbReference type="Pfam" id="PF00270">
    <property type="entry name" value="DEAD"/>
    <property type="match status" value="1"/>
</dbReference>
<dbReference type="Pfam" id="PF00271">
    <property type="entry name" value="Helicase_C"/>
    <property type="match status" value="1"/>
</dbReference>
<dbReference type="SMART" id="SM01123">
    <property type="entry name" value="DBP10CT"/>
    <property type="match status" value="1"/>
</dbReference>
<dbReference type="SMART" id="SM00487">
    <property type="entry name" value="DEXDc"/>
    <property type="match status" value="1"/>
</dbReference>
<dbReference type="SMART" id="SM00490">
    <property type="entry name" value="HELICc"/>
    <property type="match status" value="1"/>
</dbReference>
<dbReference type="SUPFAM" id="SSF52540">
    <property type="entry name" value="P-loop containing nucleoside triphosphate hydrolases"/>
    <property type="match status" value="2"/>
</dbReference>
<dbReference type="PROSITE" id="PS51192">
    <property type="entry name" value="HELICASE_ATP_BIND_1"/>
    <property type="match status" value="1"/>
</dbReference>
<dbReference type="PROSITE" id="PS51194">
    <property type="entry name" value="HELICASE_CTER"/>
    <property type="match status" value="1"/>
</dbReference>
<dbReference type="PROSITE" id="PS51195">
    <property type="entry name" value="Q_MOTIF"/>
    <property type="match status" value="1"/>
</dbReference>
<gene>
    <name type="primary">DBP10</name>
    <name type="ordered locus">YALI0D24497g</name>
</gene>
<keyword id="KW-0067">ATP-binding</keyword>
<keyword id="KW-0347">Helicase</keyword>
<keyword id="KW-0378">Hydrolase</keyword>
<keyword id="KW-0547">Nucleotide-binding</keyword>
<keyword id="KW-0539">Nucleus</keyword>
<keyword id="KW-1185">Reference proteome</keyword>
<keyword id="KW-0690">Ribosome biogenesis</keyword>
<keyword id="KW-0694">RNA-binding</keyword>
<keyword id="KW-0698">rRNA processing</keyword>
<feature type="chain" id="PRO_0000232320" description="ATP-dependent RNA helicase DBP10">
    <location>
        <begin position="1"/>
        <end position="926"/>
    </location>
</feature>
<feature type="domain" description="Helicase ATP-binding" evidence="2">
    <location>
        <begin position="133"/>
        <end position="305"/>
    </location>
</feature>
<feature type="domain" description="Helicase C-terminal" evidence="3">
    <location>
        <begin position="370"/>
        <end position="529"/>
    </location>
</feature>
<feature type="region of interest" description="Disordered" evidence="4">
    <location>
        <begin position="1"/>
        <end position="102"/>
    </location>
</feature>
<feature type="region of interest" description="Disordered" evidence="4">
    <location>
        <begin position="362"/>
        <end position="387"/>
    </location>
</feature>
<feature type="region of interest" description="Disordered" evidence="4">
    <location>
        <begin position="709"/>
        <end position="731"/>
    </location>
</feature>
<feature type="region of interest" description="Disordered" evidence="4">
    <location>
        <begin position="835"/>
        <end position="926"/>
    </location>
</feature>
<feature type="short sequence motif" description="Q motif">
    <location>
        <begin position="102"/>
        <end position="130"/>
    </location>
</feature>
<feature type="short sequence motif" description="DEAD box">
    <location>
        <begin position="253"/>
        <end position="256"/>
    </location>
</feature>
<feature type="compositionally biased region" description="Acidic residues" evidence="4">
    <location>
        <begin position="19"/>
        <end position="45"/>
    </location>
</feature>
<feature type="compositionally biased region" description="Acidic residues" evidence="4">
    <location>
        <begin position="62"/>
        <end position="73"/>
    </location>
</feature>
<feature type="compositionally biased region" description="Basic and acidic residues" evidence="4">
    <location>
        <begin position="362"/>
        <end position="372"/>
    </location>
</feature>
<feature type="compositionally biased region" description="Basic residues" evidence="4">
    <location>
        <begin position="711"/>
        <end position="721"/>
    </location>
</feature>
<feature type="compositionally biased region" description="Basic and acidic residues" evidence="4">
    <location>
        <begin position="837"/>
        <end position="861"/>
    </location>
</feature>
<feature type="compositionally biased region" description="Basic and acidic residues" evidence="4">
    <location>
        <begin position="868"/>
        <end position="899"/>
    </location>
</feature>
<feature type="compositionally biased region" description="Gly residues" evidence="4">
    <location>
        <begin position="910"/>
        <end position="926"/>
    </location>
</feature>
<feature type="binding site" evidence="2">
    <location>
        <begin position="146"/>
        <end position="153"/>
    </location>
    <ligand>
        <name>ATP</name>
        <dbReference type="ChEBI" id="CHEBI:30616"/>
    </ligand>
</feature>
<organism>
    <name type="scientific">Yarrowia lipolytica (strain CLIB 122 / E 150)</name>
    <name type="common">Yeast</name>
    <name type="synonym">Candida lipolytica</name>
    <dbReference type="NCBI Taxonomy" id="284591"/>
    <lineage>
        <taxon>Eukaryota</taxon>
        <taxon>Fungi</taxon>
        <taxon>Dikarya</taxon>
        <taxon>Ascomycota</taxon>
        <taxon>Saccharomycotina</taxon>
        <taxon>Dipodascomycetes</taxon>
        <taxon>Dipodascales</taxon>
        <taxon>Dipodascales incertae sedis</taxon>
        <taxon>Yarrowia</taxon>
    </lineage>
</organism>
<name>DBP10_YARLI</name>
<sequence>MSDSEVEYDIAGSLNPGVDSEDDYSSGSESDSEIPDIIEDSEDETGPQQGEPGTMTFPNLELSDDDDDDDDDDEGRKKKKKKTDDSVESYFGAPQTGKKSSGSFAGLGLSQLVLKNIARKGFKQPTPIQRKTIPLVLEGKDVVGMARTGSGKTAAFVLPMLEKLKVHSAKVGARAVILSPSRELALQTLKVVKDFSAGTDLRLAMLVGGDSLEEQFKMMMSNPDIIIATPGRFLHLKVEMELSLASVEYICFDEADRLFELGFGEQMNELLASLPSNRQTLLFSATLPKTLVEFAKAGLHDPILVRLDAETKLPEHLEMTFFAVKENQRDACLAFILKEVIQMPFATPEQLKELERLDERAIDDGERDEDRKQKRPKFKKERLPPAHQLPSEKSTIVFCPTKHHVEYVIVLLQTLGYAVSYIYGTLDQHARKNQLYRFRTGKTSILVVTDVAARGIDVPVLANVINYSLPPSPKVFIHRVGRTARAGNRGWAYSIIKDNDIPYLLDLEVFLGRKLLTPRLFKQQNPDPSAEPDYVNTLTIGAPPRQALEIHGEELAQMVKDSYELQQLSEVAVKGERMYNKTKGSASQESAKRSKQIMALGWDDHHLMFGEDGESAKDALLARLGQKRIRETVFEFRKSKTTSGAEMMATRRAQLAPIQRRAAEKRAIQEKERLAGLVHSQDAEIARSTEEDMATEADLTGFTTEEDLRAAKKAQKSKKRSFRDSENFMSHYAPTNDDKGYAVGNFAGAASNATFDLINDGSEMQQKQGMKWDKKKGKFINAGSEGGKKFIRGEGGQRIAASFRSGRFDKWKAAHKVGNLKVGALEESGPATKRVLSAREFKHNKNEAPKRADKYRDDFHKQKTKVAAAKEDGRIQKPQPKSELKSTADVRKSRILAEKRKQKNARPSRGGRGGGRGGRGGGRGGR</sequence>
<reference key="1">
    <citation type="journal article" date="2004" name="Nature">
        <title>Genome evolution in yeasts.</title>
        <authorList>
            <person name="Dujon B."/>
            <person name="Sherman D."/>
            <person name="Fischer G."/>
            <person name="Durrens P."/>
            <person name="Casaregola S."/>
            <person name="Lafontaine I."/>
            <person name="de Montigny J."/>
            <person name="Marck C."/>
            <person name="Neuveglise C."/>
            <person name="Talla E."/>
            <person name="Goffard N."/>
            <person name="Frangeul L."/>
            <person name="Aigle M."/>
            <person name="Anthouard V."/>
            <person name="Babour A."/>
            <person name="Barbe V."/>
            <person name="Barnay S."/>
            <person name="Blanchin S."/>
            <person name="Beckerich J.-M."/>
            <person name="Beyne E."/>
            <person name="Bleykasten C."/>
            <person name="Boisrame A."/>
            <person name="Boyer J."/>
            <person name="Cattolico L."/>
            <person name="Confanioleri F."/>
            <person name="de Daruvar A."/>
            <person name="Despons L."/>
            <person name="Fabre E."/>
            <person name="Fairhead C."/>
            <person name="Ferry-Dumazet H."/>
            <person name="Groppi A."/>
            <person name="Hantraye F."/>
            <person name="Hennequin C."/>
            <person name="Jauniaux N."/>
            <person name="Joyet P."/>
            <person name="Kachouri R."/>
            <person name="Kerrest A."/>
            <person name="Koszul R."/>
            <person name="Lemaire M."/>
            <person name="Lesur I."/>
            <person name="Ma L."/>
            <person name="Muller H."/>
            <person name="Nicaud J.-M."/>
            <person name="Nikolski M."/>
            <person name="Oztas S."/>
            <person name="Ozier-Kalogeropoulos O."/>
            <person name="Pellenz S."/>
            <person name="Potier S."/>
            <person name="Richard G.-F."/>
            <person name="Straub M.-L."/>
            <person name="Suleau A."/>
            <person name="Swennen D."/>
            <person name="Tekaia F."/>
            <person name="Wesolowski-Louvel M."/>
            <person name="Westhof E."/>
            <person name="Wirth B."/>
            <person name="Zeniou-Meyer M."/>
            <person name="Zivanovic Y."/>
            <person name="Bolotin-Fukuhara M."/>
            <person name="Thierry A."/>
            <person name="Bouchier C."/>
            <person name="Caudron B."/>
            <person name="Scarpelli C."/>
            <person name="Gaillardin C."/>
            <person name="Weissenbach J."/>
            <person name="Wincker P."/>
            <person name="Souciet J.-L."/>
        </authorList>
    </citation>
    <scope>NUCLEOTIDE SEQUENCE [LARGE SCALE GENOMIC DNA]</scope>
    <source>
        <strain>CLIB 122 / E 150</strain>
    </source>
</reference>
<accession>Q6C7X8</accession>